<organism>
    <name type="scientific">Escherichia coli O6:H1 (strain CFT073 / ATCC 700928 / UPEC)</name>
    <dbReference type="NCBI Taxonomy" id="199310"/>
    <lineage>
        <taxon>Bacteria</taxon>
        <taxon>Pseudomonadati</taxon>
        <taxon>Pseudomonadota</taxon>
        <taxon>Gammaproteobacteria</taxon>
        <taxon>Enterobacterales</taxon>
        <taxon>Enterobacteriaceae</taxon>
        <taxon>Escherichia</taxon>
    </lineage>
</organism>
<reference key="1">
    <citation type="journal article" date="2002" name="Proc. Natl. Acad. Sci. U.S.A.">
        <title>Extensive mosaic structure revealed by the complete genome sequence of uropathogenic Escherichia coli.</title>
        <authorList>
            <person name="Welch R.A."/>
            <person name="Burland V."/>
            <person name="Plunkett G. III"/>
            <person name="Redford P."/>
            <person name="Roesch P."/>
            <person name="Rasko D."/>
            <person name="Buckles E.L."/>
            <person name="Liou S.-R."/>
            <person name="Boutin A."/>
            <person name="Hackett J."/>
            <person name="Stroud D."/>
            <person name="Mayhew G.F."/>
            <person name="Rose D.J."/>
            <person name="Zhou S."/>
            <person name="Schwartz D.C."/>
            <person name="Perna N.T."/>
            <person name="Mobley H.L.T."/>
            <person name="Donnenberg M.S."/>
            <person name="Blattner F.R."/>
        </authorList>
    </citation>
    <scope>NUCLEOTIDE SEQUENCE [LARGE SCALE GENOMIC DNA]</scope>
    <source>
        <strain>CFT073 / ATCC 700928 / UPEC</strain>
    </source>
</reference>
<sequence>MEKRKIILDCDPGHDDAIAIMMAAKHPAIDLLGITIVAGNQTLDKTLINGLNVCQKLEINVPVYAGMPQPIMRQQIVADNIHGETGLDGPVFEPLTRQAENTHAVKYIIDTLMASDGDITLVPVGPLSNIAVAMRMQPAILPKIREIVLMGGAYGTGNFTPSAEFNIFADPEAARVVFTSGVPLVMMGLDLTNQTVCTPDVIARMERAGGPAGELFSDIMNFTLKTQFENYGLAGGPVHDATCIGYLINPDGIKTQEMYVEVDVNSGPCYGRTVCDELGVLGKPANTKVGITIDTDWFWGLVEECVRGYIKTH</sequence>
<comment type="function">
    <text evidence="1">Hydrolyzes cytidine or uridine to ribose and cytosine or uracil, respectively. Has a clear preference for cytidine over uridine. Strictly specific for ribonucleosides.</text>
</comment>
<comment type="catalytic activity">
    <reaction evidence="1">
        <text>a pyrimidine ribonucleoside + H2O = a pyrimidine nucleobase + D-ribose</text>
        <dbReference type="Rhea" id="RHEA:56816"/>
        <dbReference type="ChEBI" id="CHEBI:15377"/>
        <dbReference type="ChEBI" id="CHEBI:26432"/>
        <dbReference type="ChEBI" id="CHEBI:47013"/>
        <dbReference type="ChEBI" id="CHEBI:141014"/>
        <dbReference type="EC" id="3.2.2.8"/>
    </reaction>
</comment>
<comment type="cofactor">
    <cofactor evidence="1">
        <name>Ca(2+)</name>
        <dbReference type="ChEBI" id="CHEBI:29108"/>
    </cofactor>
    <text evidence="1">Binds 1 Ca(2+) ion per monomer.</text>
</comment>
<comment type="subunit">
    <text evidence="1">Homotetramer.</text>
</comment>
<comment type="similarity">
    <text evidence="1">Belongs to the IUNH family. RihB subfamily.</text>
</comment>
<keyword id="KW-0106">Calcium</keyword>
<keyword id="KW-0326">Glycosidase</keyword>
<keyword id="KW-0378">Hydrolase</keyword>
<keyword id="KW-0479">Metal-binding</keyword>
<keyword id="KW-1185">Reference proteome</keyword>
<dbReference type="EC" id="3.2.2.8" evidence="1"/>
<dbReference type="EMBL" id="AE014075">
    <property type="protein sequence ID" value="AAN81152.1"/>
    <property type="molecule type" value="Genomic_DNA"/>
</dbReference>
<dbReference type="RefSeq" id="WP_000415422.1">
    <property type="nucleotide sequence ID" value="NZ_CP051263.1"/>
</dbReference>
<dbReference type="SMR" id="Q8FFT8"/>
<dbReference type="STRING" id="199310.c2696"/>
<dbReference type="GeneID" id="75056720"/>
<dbReference type="KEGG" id="ecc:c2696"/>
<dbReference type="eggNOG" id="COG1957">
    <property type="taxonomic scope" value="Bacteria"/>
</dbReference>
<dbReference type="HOGENOM" id="CLU_036838_2_0_6"/>
<dbReference type="BioCyc" id="ECOL199310:C2696-MONOMER"/>
<dbReference type="Proteomes" id="UP000001410">
    <property type="component" value="Chromosome"/>
</dbReference>
<dbReference type="GO" id="GO:0005829">
    <property type="term" value="C:cytosol"/>
    <property type="evidence" value="ECO:0007669"/>
    <property type="project" value="TreeGrafter"/>
</dbReference>
<dbReference type="GO" id="GO:0005509">
    <property type="term" value="F:calcium ion binding"/>
    <property type="evidence" value="ECO:0007669"/>
    <property type="project" value="UniProtKB-UniRule"/>
</dbReference>
<dbReference type="GO" id="GO:0008477">
    <property type="term" value="F:purine nucleosidase activity"/>
    <property type="evidence" value="ECO:0007669"/>
    <property type="project" value="TreeGrafter"/>
</dbReference>
<dbReference type="GO" id="GO:0045437">
    <property type="term" value="F:uridine nucleosidase activity"/>
    <property type="evidence" value="ECO:0007669"/>
    <property type="project" value="UniProtKB-ARBA"/>
</dbReference>
<dbReference type="GO" id="GO:0006152">
    <property type="term" value="P:purine nucleoside catabolic process"/>
    <property type="evidence" value="ECO:0007669"/>
    <property type="project" value="TreeGrafter"/>
</dbReference>
<dbReference type="GO" id="GO:0006206">
    <property type="term" value="P:pyrimidine nucleobase metabolic process"/>
    <property type="evidence" value="ECO:0007669"/>
    <property type="project" value="UniProtKB-UniRule"/>
</dbReference>
<dbReference type="GO" id="GO:0046133">
    <property type="term" value="P:pyrimidine ribonucleoside catabolic process"/>
    <property type="evidence" value="ECO:0007669"/>
    <property type="project" value="InterPro"/>
</dbReference>
<dbReference type="CDD" id="cd02651">
    <property type="entry name" value="nuc_hydro_IU_UC_XIUA"/>
    <property type="match status" value="1"/>
</dbReference>
<dbReference type="FunFam" id="3.90.245.10:FF:000003">
    <property type="entry name" value="Pyrimidine-specific ribonucleoside hydrolase RihB"/>
    <property type="match status" value="1"/>
</dbReference>
<dbReference type="Gene3D" id="3.90.245.10">
    <property type="entry name" value="Ribonucleoside hydrolase-like"/>
    <property type="match status" value="1"/>
</dbReference>
<dbReference type="HAMAP" id="MF_01433">
    <property type="entry name" value="Pyrim_hydro_RihB"/>
    <property type="match status" value="1"/>
</dbReference>
<dbReference type="InterPro" id="IPR015910">
    <property type="entry name" value="I/U_nuclsd_hydro_CS"/>
</dbReference>
<dbReference type="InterPro" id="IPR001910">
    <property type="entry name" value="Inosine/uridine_hydrolase_dom"/>
</dbReference>
<dbReference type="InterPro" id="IPR023186">
    <property type="entry name" value="IUNH"/>
</dbReference>
<dbReference type="InterPro" id="IPR022977">
    <property type="entry name" value="Pyrim_hydro_RihB"/>
</dbReference>
<dbReference type="InterPro" id="IPR036452">
    <property type="entry name" value="Ribo_hydro-like"/>
</dbReference>
<dbReference type="NCBIfam" id="NF007417">
    <property type="entry name" value="PRK09955.1"/>
    <property type="match status" value="1"/>
</dbReference>
<dbReference type="PANTHER" id="PTHR12304">
    <property type="entry name" value="INOSINE-URIDINE PREFERRING NUCLEOSIDE HYDROLASE"/>
    <property type="match status" value="1"/>
</dbReference>
<dbReference type="PANTHER" id="PTHR12304:SF4">
    <property type="entry name" value="URIDINE NUCLEOSIDASE"/>
    <property type="match status" value="1"/>
</dbReference>
<dbReference type="Pfam" id="PF01156">
    <property type="entry name" value="IU_nuc_hydro"/>
    <property type="match status" value="1"/>
</dbReference>
<dbReference type="SUPFAM" id="SSF53590">
    <property type="entry name" value="Nucleoside hydrolase"/>
    <property type="match status" value="1"/>
</dbReference>
<dbReference type="PROSITE" id="PS01247">
    <property type="entry name" value="IUNH"/>
    <property type="match status" value="1"/>
</dbReference>
<evidence type="ECO:0000255" key="1">
    <source>
        <dbReference type="HAMAP-Rule" id="MF_01433"/>
    </source>
</evidence>
<protein>
    <recommendedName>
        <fullName evidence="1">Pyrimidine-specific ribonucleoside hydrolase RihB</fullName>
        <ecNumber evidence="1">3.2.2.8</ecNumber>
    </recommendedName>
    <alternativeName>
        <fullName evidence="1">Cytidine/uridine-specific hydrolase</fullName>
    </alternativeName>
</protein>
<gene>
    <name evidence="1" type="primary">rihB</name>
    <name type="ordered locus">c2696</name>
</gene>
<name>RIHB_ECOL6</name>
<proteinExistence type="inferred from homology"/>
<feature type="chain" id="PRO_0000206826" description="Pyrimidine-specific ribonucleoside hydrolase RihB">
    <location>
        <begin position="1"/>
        <end position="313"/>
    </location>
</feature>
<feature type="active site" description="Proton acceptor" evidence="1">
    <location>
        <position position="11"/>
    </location>
</feature>
<feature type="binding site" evidence="1">
    <location>
        <position position="11"/>
    </location>
    <ligand>
        <name>Ca(2+)</name>
        <dbReference type="ChEBI" id="CHEBI:29108"/>
    </ligand>
</feature>
<feature type="binding site" evidence="1">
    <location>
        <position position="16"/>
    </location>
    <ligand>
        <name>Ca(2+)</name>
        <dbReference type="ChEBI" id="CHEBI:29108"/>
    </ligand>
</feature>
<feature type="binding site" evidence="1">
    <location>
        <position position="124"/>
    </location>
    <ligand>
        <name>Ca(2+)</name>
        <dbReference type="ChEBI" id="CHEBI:29108"/>
    </ligand>
</feature>
<feature type="binding site" evidence="1">
    <location>
        <position position="227"/>
    </location>
    <ligand>
        <name>substrate</name>
    </ligand>
</feature>
<feature type="binding site" evidence="1">
    <location>
        <position position="239"/>
    </location>
    <ligand>
        <name>substrate</name>
    </ligand>
</feature>
<feature type="binding site" evidence="1">
    <location>
        <position position="240"/>
    </location>
    <ligand>
        <name>Ca(2+)</name>
        <dbReference type="ChEBI" id="CHEBI:29108"/>
    </ligand>
</feature>
<accession>Q8FFT8</accession>